<reference key="1">
    <citation type="journal article" date="1997" name="Nature">
        <title>The nucleotide sequence of Saccharomyces cerevisiae chromosome XV.</title>
        <authorList>
            <person name="Dujon B."/>
            <person name="Albermann K."/>
            <person name="Aldea M."/>
            <person name="Alexandraki D."/>
            <person name="Ansorge W."/>
            <person name="Arino J."/>
            <person name="Benes V."/>
            <person name="Bohn C."/>
            <person name="Bolotin-Fukuhara M."/>
            <person name="Bordonne R."/>
            <person name="Boyer J."/>
            <person name="Camasses A."/>
            <person name="Casamayor A."/>
            <person name="Casas C."/>
            <person name="Cheret G."/>
            <person name="Cziepluch C."/>
            <person name="Daignan-Fornier B."/>
            <person name="Dang V.-D."/>
            <person name="de Haan M."/>
            <person name="Delius H."/>
            <person name="Durand P."/>
            <person name="Fairhead C."/>
            <person name="Feldmann H."/>
            <person name="Gaillon L."/>
            <person name="Galisson F."/>
            <person name="Gamo F.-J."/>
            <person name="Gancedo C."/>
            <person name="Goffeau A."/>
            <person name="Goulding S.E."/>
            <person name="Grivell L.A."/>
            <person name="Habbig B."/>
            <person name="Hand N.J."/>
            <person name="Hani J."/>
            <person name="Hattenhorst U."/>
            <person name="Hebling U."/>
            <person name="Hernando Y."/>
            <person name="Herrero E."/>
            <person name="Heumann K."/>
            <person name="Hiesel R."/>
            <person name="Hilger F."/>
            <person name="Hofmann B."/>
            <person name="Hollenberg C.P."/>
            <person name="Hughes B."/>
            <person name="Jauniaux J.-C."/>
            <person name="Kalogeropoulos A."/>
            <person name="Katsoulou C."/>
            <person name="Kordes E."/>
            <person name="Lafuente M.J."/>
            <person name="Landt O."/>
            <person name="Louis E.J."/>
            <person name="Maarse A.C."/>
            <person name="Madania A."/>
            <person name="Mannhaupt G."/>
            <person name="Marck C."/>
            <person name="Martin R.P."/>
            <person name="Mewes H.-W."/>
            <person name="Michaux G."/>
            <person name="Paces V."/>
            <person name="Parle-McDermott A.G."/>
            <person name="Pearson B.M."/>
            <person name="Perrin A."/>
            <person name="Pettersson B."/>
            <person name="Poch O."/>
            <person name="Pohl T.M."/>
            <person name="Poirey R."/>
            <person name="Portetelle D."/>
            <person name="Pujol A."/>
            <person name="Purnelle B."/>
            <person name="Ramezani Rad M."/>
            <person name="Rechmann S."/>
            <person name="Schwager C."/>
            <person name="Schweizer M."/>
            <person name="Sor F."/>
            <person name="Sterky F."/>
            <person name="Tarassov I.A."/>
            <person name="Teodoru C."/>
            <person name="Tettelin H."/>
            <person name="Thierry A."/>
            <person name="Tobiasch E."/>
            <person name="Tzermia M."/>
            <person name="Uhlen M."/>
            <person name="Unseld M."/>
            <person name="Valens M."/>
            <person name="Vandenbol M."/>
            <person name="Vetter I."/>
            <person name="Vlcek C."/>
            <person name="Voet M."/>
            <person name="Volckaert G."/>
            <person name="Voss H."/>
            <person name="Wambutt R."/>
            <person name="Wedler H."/>
            <person name="Wiemann S."/>
            <person name="Winsor B."/>
            <person name="Wolfe K.H."/>
            <person name="Zollner A."/>
            <person name="Zumstein E."/>
            <person name="Kleine K."/>
        </authorList>
    </citation>
    <scope>NUCLEOTIDE SEQUENCE [LARGE SCALE GENOMIC DNA]</scope>
    <source>
        <strain>ATCC 204508 / S288c</strain>
    </source>
</reference>
<reference key="2">
    <citation type="journal article" date="2014" name="G3 (Bethesda)">
        <title>The reference genome sequence of Saccharomyces cerevisiae: Then and now.</title>
        <authorList>
            <person name="Engel S.R."/>
            <person name="Dietrich F.S."/>
            <person name="Fisk D.G."/>
            <person name="Binkley G."/>
            <person name="Balakrishnan R."/>
            <person name="Costanzo M.C."/>
            <person name="Dwight S.S."/>
            <person name="Hitz B.C."/>
            <person name="Karra K."/>
            <person name="Nash R.S."/>
            <person name="Weng S."/>
            <person name="Wong E.D."/>
            <person name="Lloyd P."/>
            <person name="Skrzypek M.S."/>
            <person name="Miyasato S.R."/>
            <person name="Simison M."/>
            <person name="Cherry J.M."/>
        </authorList>
    </citation>
    <scope>GENOME REANNOTATION</scope>
    <source>
        <strain>ATCC 204508 / S288c</strain>
    </source>
</reference>
<reference key="3">
    <citation type="journal article" date="2003" name="Nature">
        <title>Global analysis of protein localization in budding yeast.</title>
        <authorList>
            <person name="Huh W.-K."/>
            <person name="Falvo J.V."/>
            <person name="Gerke L.C."/>
            <person name="Carroll A.S."/>
            <person name="Howson R.W."/>
            <person name="Weissman J.S."/>
            <person name="O'Shea E.K."/>
        </authorList>
    </citation>
    <scope>SUBCELLULAR LOCATION [LARGE SCALE ANALYSIS]</scope>
</reference>
<reference key="4">
    <citation type="journal article" date="2003" name="Nature">
        <title>Global analysis of protein expression in yeast.</title>
        <authorList>
            <person name="Ghaemmaghami S."/>
            <person name="Huh W.-K."/>
            <person name="Bower K."/>
            <person name="Howson R.W."/>
            <person name="Belle A."/>
            <person name="Dephoure N."/>
            <person name="O'Shea E.K."/>
            <person name="Weissman J.S."/>
        </authorList>
    </citation>
    <scope>LEVEL OF PROTEIN EXPRESSION [LARGE SCALE ANALYSIS]</scope>
</reference>
<reference key="5">
    <citation type="journal article" date="2006" name="Genetics">
        <title>Genomic analysis of the Opi- phenotype.</title>
        <authorList>
            <person name="Hancock L.C."/>
            <person name="Behta R.P."/>
            <person name="Lopes J.M."/>
        </authorList>
    </citation>
    <scope>FUNCTION</scope>
</reference>
<reference key="6">
    <citation type="journal article" date="2008" name="Mol. Cell. Proteomics">
        <title>A multidimensional chromatography technology for in-depth phosphoproteome analysis.</title>
        <authorList>
            <person name="Albuquerque C.P."/>
            <person name="Smolka M.B."/>
            <person name="Payne S.H."/>
            <person name="Bafna V."/>
            <person name="Eng J."/>
            <person name="Zhou H."/>
        </authorList>
    </citation>
    <scope>IDENTIFICATION BY MASS SPECTROMETRY [LARGE SCALE ANALYSIS]</scope>
</reference>
<gene>
    <name type="primary">OPI10</name>
    <name type="ordered locus">YOL032W</name>
</gene>
<dbReference type="EMBL" id="Z74774">
    <property type="protein sequence ID" value="CAA99032.1"/>
    <property type="molecule type" value="Genomic_DNA"/>
</dbReference>
<dbReference type="EMBL" id="BK006948">
    <property type="protein sequence ID" value="DAA10749.1"/>
    <property type="molecule type" value="Genomic_DNA"/>
</dbReference>
<dbReference type="PIR" id="S66715">
    <property type="entry name" value="S66715"/>
</dbReference>
<dbReference type="RefSeq" id="NP_014610.1">
    <property type="nucleotide sequence ID" value="NM_001183286.1"/>
</dbReference>
<dbReference type="SMR" id="Q08202"/>
<dbReference type="BioGRID" id="34368">
    <property type="interactions" value="46"/>
</dbReference>
<dbReference type="DIP" id="DIP-2922N"/>
<dbReference type="FunCoup" id="Q08202">
    <property type="interactions" value="418"/>
</dbReference>
<dbReference type="IntAct" id="Q08202">
    <property type="interactions" value="5"/>
</dbReference>
<dbReference type="MINT" id="Q08202"/>
<dbReference type="STRING" id="4932.YOL032W"/>
<dbReference type="iPTMnet" id="Q08202"/>
<dbReference type="PaxDb" id="4932-YOL032W"/>
<dbReference type="PeptideAtlas" id="Q08202"/>
<dbReference type="EnsemblFungi" id="YOL032W_mRNA">
    <property type="protein sequence ID" value="YOL032W"/>
    <property type="gene ID" value="YOL032W"/>
</dbReference>
<dbReference type="GeneID" id="854125"/>
<dbReference type="KEGG" id="sce:YOL032W"/>
<dbReference type="AGR" id="SGD:S000005392"/>
<dbReference type="SGD" id="S000005392">
    <property type="gene designation" value="OPI10"/>
</dbReference>
<dbReference type="VEuPathDB" id="FungiDB:YOL032W"/>
<dbReference type="eggNOG" id="KOG4067">
    <property type="taxonomic scope" value="Eukaryota"/>
</dbReference>
<dbReference type="GeneTree" id="ENSGT00390000004056"/>
<dbReference type="HOGENOM" id="CLU_084839_1_0_1"/>
<dbReference type="InParanoid" id="Q08202"/>
<dbReference type="OMA" id="WWAKFER"/>
<dbReference type="OrthoDB" id="10248398at2759"/>
<dbReference type="BioCyc" id="YEAST:G3O-33448-MONOMER"/>
<dbReference type="Reactome" id="R-SCE-3371453">
    <property type="pathway name" value="Regulation of HSF1-mediated heat shock response"/>
</dbReference>
<dbReference type="BioGRID-ORCS" id="854125">
    <property type="hits" value="3 hits in 10 CRISPR screens"/>
</dbReference>
<dbReference type="PRO" id="PR:Q08202"/>
<dbReference type="Proteomes" id="UP000002311">
    <property type="component" value="Chromosome XV"/>
</dbReference>
<dbReference type="RNAct" id="Q08202">
    <property type="molecule type" value="protein"/>
</dbReference>
<dbReference type="GO" id="GO:0005737">
    <property type="term" value="C:cytoplasm"/>
    <property type="evidence" value="ECO:0007005"/>
    <property type="project" value="SGD"/>
</dbReference>
<dbReference type="GO" id="GO:0005829">
    <property type="term" value="C:cytosol"/>
    <property type="evidence" value="ECO:0000318"/>
    <property type="project" value="GO_Central"/>
</dbReference>
<dbReference type="GO" id="GO:0005634">
    <property type="term" value="C:nucleus"/>
    <property type="evidence" value="ECO:0007005"/>
    <property type="project" value="SGD"/>
</dbReference>
<dbReference type="GO" id="GO:0061608">
    <property type="term" value="F:nuclear import signal receptor activity"/>
    <property type="evidence" value="ECO:0000318"/>
    <property type="project" value="GO_Central"/>
</dbReference>
<dbReference type="GO" id="GO:0006020">
    <property type="term" value="P:inositol metabolic process"/>
    <property type="evidence" value="ECO:0000315"/>
    <property type="project" value="SGD"/>
</dbReference>
<dbReference type="GO" id="GO:0008654">
    <property type="term" value="P:phospholipid biosynthetic process"/>
    <property type="evidence" value="ECO:0007669"/>
    <property type="project" value="UniProtKB-KW"/>
</dbReference>
<dbReference type="GO" id="GO:0006606">
    <property type="term" value="P:protein import into nucleus"/>
    <property type="evidence" value="ECO:0000318"/>
    <property type="project" value="GO_Central"/>
</dbReference>
<dbReference type="InterPro" id="IPR048364">
    <property type="entry name" value="Hikeshi-like_C"/>
</dbReference>
<dbReference type="InterPro" id="IPR008493">
    <property type="entry name" value="Hikeshi-like_N"/>
</dbReference>
<dbReference type="InterPro" id="IPR031318">
    <property type="entry name" value="OPI10"/>
</dbReference>
<dbReference type="PANTHER" id="PTHR12925">
    <property type="entry name" value="HIKESHI FAMILY MEMBER"/>
    <property type="match status" value="1"/>
</dbReference>
<dbReference type="PANTHER" id="PTHR12925:SF0">
    <property type="entry name" value="PROTEIN HIKESHI"/>
    <property type="match status" value="1"/>
</dbReference>
<dbReference type="Pfam" id="PF21057">
    <property type="entry name" value="Hikeshi-like_C"/>
    <property type="match status" value="1"/>
</dbReference>
<dbReference type="Pfam" id="PF05603">
    <property type="entry name" value="Hikeshi-like_N"/>
    <property type="match status" value="1"/>
</dbReference>
<evidence type="ECO:0000269" key="1">
    <source>
    </source>
</evidence>
<evidence type="ECO:0000269" key="2">
    <source>
    </source>
</evidence>
<evidence type="ECO:0000269" key="3">
    <source>
    </source>
</evidence>
<evidence type="ECO:0000305" key="4"/>
<keyword id="KW-0963">Cytoplasm</keyword>
<keyword id="KW-0444">Lipid biosynthesis</keyword>
<keyword id="KW-0443">Lipid metabolism</keyword>
<keyword id="KW-0539">Nucleus</keyword>
<keyword id="KW-0594">Phospholipid biosynthesis</keyword>
<keyword id="KW-1208">Phospholipid metabolism</keyword>
<keyword id="KW-1185">Reference proteome</keyword>
<protein>
    <recommendedName>
        <fullName>Protein OPI10</fullName>
    </recommendedName>
    <alternativeName>
        <fullName>Overproducer of inositol protein 10</fullName>
    </alternativeName>
</protein>
<proteinExistence type="evidence at protein level"/>
<feature type="chain" id="PRO_0000245260" description="Protein OPI10">
    <location>
        <begin position="1"/>
        <end position="246"/>
    </location>
</feature>
<name>OPI10_YEAST</name>
<organism>
    <name type="scientific">Saccharomyces cerevisiae (strain ATCC 204508 / S288c)</name>
    <name type="common">Baker's yeast</name>
    <dbReference type="NCBI Taxonomy" id="559292"/>
    <lineage>
        <taxon>Eukaryota</taxon>
        <taxon>Fungi</taxon>
        <taxon>Dikarya</taxon>
        <taxon>Ascomycota</taxon>
        <taxon>Saccharomycotina</taxon>
        <taxon>Saccharomycetes</taxon>
        <taxon>Saccharomycetales</taxon>
        <taxon>Saccharomycetaceae</taxon>
        <taxon>Saccharomyces</taxon>
    </lineage>
</organism>
<accession>Q08202</accession>
<accession>D6W233</accession>
<comment type="function">
    <text evidence="3">Involved in phospholipid biosynthesis.</text>
</comment>
<comment type="subcellular location">
    <subcellularLocation>
        <location evidence="1">Cytoplasm</location>
    </subcellularLocation>
    <subcellularLocation>
        <location evidence="1">Nucleus</location>
    </subcellularLocation>
</comment>
<comment type="miscellaneous">
    <text evidence="2">Present with 1910 molecules/cell in log phase SD medium.</text>
</comment>
<comment type="similarity">
    <text evidence="4">Belongs to the OPI10 family.</text>
</comment>
<sequence>MFAAIASGNPLQLSVEVPNSNGLQHTIVLSRTKPKLYSHITLFILPNVTFPQDYIATVYFKLSPQEEFKLFGYLSSEKPSAIFKVQIPSSKKDAGDTSDGLGEIDMDVDDGSGAADPFTDTNGSSSNNISELIIGISIEPREQGMMKLEEWKASMNAEAQKNNSLILSRPNLGIIRNITTAGQLAQVYPSLTQELAAKIVQHAYNYLSGFLDAQGNVPIKRFDTWWDKFRNRLANDGTFLDEVTKN</sequence>